<feature type="chain" id="PRO_0000102983" description="SsrA-binding protein">
    <location>
        <begin position="1"/>
        <end position="145"/>
    </location>
</feature>
<reference key="1">
    <citation type="journal article" date="2004" name="J. Bacteriol.">
        <title>The genome sequence of Mycoplasma hyopneumoniae strain 232, the agent of swine mycoplasmosis.</title>
        <authorList>
            <person name="Minion F.C."/>
            <person name="Lefkowitz E.J."/>
            <person name="Madsen M.L."/>
            <person name="Cleary B.J."/>
            <person name="Swartzell S.M."/>
            <person name="Mahairas G.G."/>
        </authorList>
    </citation>
    <scope>NUCLEOTIDE SEQUENCE [LARGE SCALE GENOMIC DNA]</scope>
    <source>
        <strain>232</strain>
    </source>
</reference>
<evidence type="ECO:0000255" key="1">
    <source>
        <dbReference type="HAMAP-Rule" id="MF_00023"/>
    </source>
</evidence>
<dbReference type="EMBL" id="AE017332">
    <property type="protein sequence ID" value="AAV27715.1"/>
    <property type="molecule type" value="Genomic_DNA"/>
</dbReference>
<dbReference type="RefSeq" id="WP_011205948.1">
    <property type="nucleotide sequence ID" value="NC_006360.1"/>
</dbReference>
<dbReference type="SMR" id="Q601U1"/>
<dbReference type="KEGG" id="mhy:mhp110"/>
<dbReference type="eggNOG" id="COG0691">
    <property type="taxonomic scope" value="Bacteria"/>
</dbReference>
<dbReference type="HOGENOM" id="CLU_108953_3_1_14"/>
<dbReference type="PhylomeDB" id="Q601U1"/>
<dbReference type="Proteomes" id="UP000006822">
    <property type="component" value="Chromosome"/>
</dbReference>
<dbReference type="GO" id="GO:0005829">
    <property type="term" value="C:cytosol"/>
    <property type="evidence" value="ECO:0007669"/>
    <property type="project" value="TreeGrafter"/>
</dbReference>
<dbReference type="GO" id="GO:0003723">
    <property type="term" value="F:RNA binding"/>
    <property type="evidence" value="ECO:0007669"/>
    <property type="project" value="UniProtKB-UniRule"/>
</dbReference>
<dbReference type="GO" id="GO:0070929">
    <property type="term" value="P:trans-translation"/>
    <property type="evidence" value="ECO:0007669"/>
    <property type="project" value="UniProtKB-UniRule"/>
</dbReference>
<dbReference type="CDD" id="cd09294">
    <property type="entry name" value="SmpB"/>
    <property type="match status" value="1"/>
</dbReference>
<dbReference type="Gene3D" id="2.40.280.10">
    <property type="match status" value="1"/>
</dbReference>
<dbReference type="HAMAP" id="MF_00023">
    <property type="entry name" value="SmpB"/>
    <property type="match status" value="1"/>
</dbReference>
<dbReference type="InterPro" id="IPR023620">
    <property type="entry name" value="SmpB"/>
</dbReference>
<dbReference type="InterPro" id="IPR000037">
    <property type="entry name" value="SsrA-bd_prot"/>
</dbReference>
<dbReference type="InterPro" id="IPR020081">
    <property type="entry name" value="SsrA-bd_prot_CS"/>
</dbReference>
<dbReference type="NCBIfam" id="NF003843">
    <property type="entry name" value="PRK05422.1"/>
    <property type="match status" value="1"/>
</dbReference>
<dbReference type="NCBIfam" id="TIGR00086">
    <property type="entry name" value="smpB"/>
    <property type="match status" value="1"/>
</dbReference>
<dbReference type="PANTHER" id="PTHR30308:SF2">
    <property type="entry name" value="SSRA-BINDING PROTEIN"/>
    <property type="match status" value="1"/>
</dbReference>
<dbReference type="PANTHER" id="PTHR30308">
    <property type="entry name" value="TMRNA-BINDING COMPONENT OF TRANS-TRANSLATION TAGGING COMPLEX"/>
    <property type="match status" value="1"/>
</dbReference>
<dbReference type="Pfam" id="PF01668">
    <property type="entry name" value="SmpB"/>
    <property type="match status" value="1"/>
</dbReference>
<dbReference type="SUPFAM" id="SSF74982">
    <property type="entry name" value="Small protein B (SmpB)"/>
    <property type="match status" value="1"/>
</dbReference>
<dbReference type="PROSITE" id="PS01317">
    <property type="entry name" value="SSRP"/>
    <property type="match status" value="1"/>
</dbReference>
<protein>
    <recommendedName>
        <fullName evidence="1">SsrA-binding protein</fullName>
    </recommendedName>
    <alternativeName>
        <fullName evidence="1">Small protein B</fullName>
    </alternativeName>
</protein>
<gene>
    <name evidence="1" type="primary">smpB</name>
    <name type="ordered locus">mhp110</name>
</gene>
<accession>Q601U1</accession>
<comment type="function">
    <text evidence="1">Required for rescue of stalled ribosomes mediated by trans-translation. Binds to transfer-messenger RNA (tmRNA), required for stable association of tmRNA with ribosomes. tmRNA and SmpB together mimic tRNA shape, replacing the anticodon stem-loop with SmpB. tmRNA is encoded by the ssrA gene; the 2 termini fold to resemble tRNA(Ala) and it encodes a 'tag peptide', a short internal open reading frame. During trans-translation Ala-aminoacylated tmRNA acts like a tRNA, entering the A-site of stalled ribosomes, displacing the stalled mRNA. The ribosome then switches to translate the ORF on the tmRNA; the nascent peptide is terminated with the 'tag peptide' encoded by the tmRNA and targeted for degradation. The ribosome is freed to recommence translation, which seems to be the essential function of trans-translation.</text>
</comment>
<comment type="subcellular location">
    <subcellularLocation>
        <location evidence="1">Cytoplasm</location>
    </subcellularLocation>
    <text evidence="1">The tmRNA-SmpB complex associates with stalled 70S ribosomes.</text>
</comment>
<comment type="similarity">
    <text evidence="1">Belongs to the SmpB family.</text>
</comment>
<sequence length="145" mass="16994">MEILIKNKRANFDYEIIDRFTAGIVLLGWEVKSIQAKNISLVGAFCYFKGHELFLSNAKISEYKGSRGQTDRSRKLLMHKHELKKILKEKITRKLAIIPLFIGQKNRKIKLEIALAKGKTKLDKRNLIKERDQKREAAKFLKNYY</sequence>
<keyword id="KW-0963">Cytoplasm</keyword>
<keyword id="KW-0694">RNA-binding</keyword>
<organism>
    <name type="scientific">Mesomycoplasma hyopneumoniae (strain 232)</name>
    <name type="common">Mycoplasma hyopneumoniae</name>
    <dbReference type="NCBI Taxonomy" id="295358"/>
    <lineage>
        <taxon>Bacteria</taxon>
        <taxon>Bacillati</taxon>
        <taxon>Mycoplasmatota</taxon>
        <taxon>Mycoplasmoidales</taxon>
        <taxon>Metamycoplasmataceae</taxon>
        <taxon>Mesomycoplasma</taxon>
    </lineage>
</organism>
<name>SSRP_MESH2</name>
<proteinExistence type="inferred from homology"/>